<evidence type="ECO:0000250" key="1"/>
<evidence type="ECO:0000256" key="2">
    <source>
        <dbReference type="SAM" id="MobiDB-lite"/>
    </source>
</evidence>
<evidence type="ECO:0000305" key="3"/>
<name>NOP9_ASPOR</name>
<dbReference type="EMBL" id="BA000050">
    <property type="protein sequence ID" value="BAE57815.1"/>
    <property type="molecule type" value="Genomic_DNA"/>
</dbReference>
<dbReference type="RefSeq" id="XP_001819817.1">
    <property type="nucleotide sequence ID" value="XM_001819765.1"/>
</dbReference>
<dbReference type="SMR" id="Q2UKV0"/>
<dbReference type="STRING" id="510516.Q2UKV0"/>
<dbReference type="EnsemblFungi" id="BAE57815">
    <property type="protein sequence ID" value="BAE57815"/>
    <property type="gene ID" value="AO090003000665"/>
</dbReference>
<dbReference type="GeneID" id="5991800"/>
<dbReference type="KEGG" id="aor:AO090003000665"/>
<dbReference type="VEuPathDB" id="FungiDB:AO090003000665"/>
<dbReference type="HOGENOM" id="CLU_008720_1_1_1"/>
<dbReference type="OMA" id="HHLVRNF"/>
<dbReference type="OrthoDB" id="103029at5052"/>
<dbReference type="Proteomes" id="UP000006564">
    <property type="component" value="Chromosome 2"/>
</dbReference>
<dbReference type="GO" id="GO:0030686">
    <property type="term" value="C:90S preribosome"/>
    <property type="evidence" value="ECO:0007669"/>
    <property type="project" value="TreeGrafter"/>
</dbReference>
<dbReference type="GO" id="GO:0005730">
    <property type="term" value="C:nucleolus"/>
    <property type="evidence" value="ECO:0007669"/>
    <property type="project" value="UniProtKB-SubCell"/>
</dbReference>
<dbReference type="GO" id="GO:0030688">
    <property type="term" value="C:preribosome, small subunit precursor"/>
    <property type="evidence" value="ECO:0007669"/>
    <property type="project" value="TreeGrafter"/>
</dbReference>
<dbReference type="GO" id="GO:0003723">
    <property type="term" value="F:RNA binding"/>
    <property type="evidence" value="ECO:0007669"/>
    <property type="project" value="InterPro"/>
</dbReference>
<dbReference type="GO" id="GO:0000480">
    <property type="term" value="P:endonucleolytic cleavage in 5'-ETS of tricistronic rRNA transcript (SSU-rRNA, 5.8S rRNA, LSU-rRNA)"/>
    <property type="evidence" value="ECO:0007669"/>
    <property type="project" value="TreeGrafter"/>
</dbReference>
<dbReference type="GO" id="GO:0000447">
    <property type="term" value="P:endonucleolytic cleavage in ITS1 to separate SSU-rRNA from 5.8S rRNA and LSU-rRNA from tricistronic rRNA transcript (SSU-rRNA, 5.8S rRNA, LSU-rRNA)"/>
    <property type="evidence" value="ECO:0007669"/>
    <property type="project" value="TreeGrafter"/>
</dbReference>
<dbReference type="GO" id="GO:0000472">
    <property type="term" value="P:endonucleolytic cleavage to generate mature 5'-end of SSU-rRNA from (SSU-rRNA, 5.8S rRNA, LSU-rRNA)"/>
    <property type="evidence" value="ECO:0007669"/>
    <property type="project" value="TreeGrafter"/>
</dbReference>
<dbReference type="GO" id="GO:0000056">
    <property type="term" value="P:ribosomal small subunit export from nucleus"/>
    <property type="evidence" value="ECO:0007669"/>
    <property type="project" value="TreeGrafter"/>
</dbReference>
<dbReference type="Gene3D" id="1.25.10.10">
    <property type="entry name" value="Leucine-rich Repeat Variant"/>
    <property type="match status" value="2"/>
</dbReference>
<dbReference type="InterPro" id="IPR011989">
    <property type="entry name" value="ARM-like"/>
</dbReference>
<dbReference type="InterPro" id="IPR016024">
    <property type="entry name" value="ARM-type_fold"/>
</dbReference>
<dbReference type="InterPro" id="IPR040000">
    <property type="entry name" value="NOP9"/>
</dbReference>
<dbReference type="InterPro" id="IPR001313">
    <property type="entry name" value="Pumilio_RNA-bd_rpt"/>
</dbReference>
<dbReference type="PANTHER" id="PTHR13102">
    <property type="entry name" value="NUCLEOLAR PROTEIN 9"/>
    <property type="match status" value="1"/>
</dbReference>
<dbReference type="PANTHER" id="PTHR13102:SF0">
    <property type="entry name" value="NUCLEOLAR PROTEIN 9"/>
    <property type="match status" value="1"/>
</dbReference>
<dbReference type="Pfam" id="PF22493">
    <property type="entry name" value="PUF_NOP9"/>
    <property type="match status" value="1"/>
</dbReference>
<dbReference type="SMART" id="SM00025">
    <property type="entry name" value="Pumilio"/>
    <property type="match status" value="6"/>
</dbReference>
<dbReference type="SUPFAM" id="SSF48371">
    <property type="entry name" value="ARM repeat"/>
    <property type="match status" value="1"/>
</dbReference>
<organism>
    <name type="scientific">Aspergillus oryzae (strain ATCC 42149 / RIB 40)</name>
    <name type="common">Yellow koji mold</name>
    <dbReference type="NCBI Taxonomy" id="510516"/>
    <lineage>
        <taxon>Eukaryota</taxon>
        <taxon>Fungi</taxon>
        <taxon>Dikarya</taxon>
        <taxon>Ascomycota</taxon>
        <taxon>Pezizomycotina</taxon>
        <taxon>Eurotiomycetes</taxon>
        <taxon>Eurotiomycetidae</taxon>
        <taxon>Eurotiales</taxon>
        <taxon>Aspergillaceae</taxon>
        <taxon>Aspergillus</taxon>
        <taxon>Aspergillus subgen. Circumdati</taxon>
    </lineage>
</organism>
<feature type="chain" id="PRO_0000407801" description="Nucleolar protein 9">
    <location>
        <begin position="1"/>
        <end position="707"/>
    </location>
</feature>
<feature type="repeat" description="Pumilio 1">
    <location>
        <begin position="122"/>
        <end position="157"/>
    </location>
</feature>
<feature type="repeat" description="Pumilio 2">
    <location>
        <begin position="158"/>
        <end position="193"/>
    </location>
</feature>
<feature type="repeat" description="Pumilio 3">
    <location>
        <begin position="365"/>
        <end position="400"/>
    </location>
</feature>
<feature type="repeat" description="Pumilio 4">
    <location>
        <begin position="401"/>
        <end position="437"/>
    </location>
</feature>
<feature type="repeat" description="Pumilio 5">
    <location>
        <begin position="548"/>
        <end position="588"/>
    </location>
</feature>
<feature type="repeat" description="Pumilio 6">
    <location>
        <begin position="590"/>
        <end position="627"/>
    </location>
</feature>
<feature type="region of interest" description="Disordered" evidence="2">
    <location>
        <begin position="1"/>
        <end position="77"/>
    </location>
</feature>
<feature type="region of interest" description="Disordered" evidence="2">
    <location>
        <begin position="268"/>
        <end position="287"/>
    </location>
</feature>
<feature type="region of interest" description="Disordered" evidence="2">
    <location>
        <begin position="497"/>
        <end position="523"/>
    </location>
</feature>
<feature type="compositionally biased region" description="Basic and acidic residues" evidence="2">
    <location>
        <begin position="1"/>
        <end position="27"/>
    </location>
</feature>
<feature type="compositionally biased region" description="Low complexity" evidence="2">
    <location>
        <begin position="57"/>
        <end position="66"/>
    </location>
</feature>
<reference key="1">
    <citation type="journal article" date="2005" name="Nature">
        <title>Genome sequencing and analysis of Aspergillus oryzae.</title>
        <authorList>
            <person name="Machida M."/>
            <person name="Asai K."/>
            <person name="Sano M."/>
            <person name="Tanaka T."/>
            <person name="Kumagai T."/>
            <person name="Terai G."/>
            <person name="Kusumoto K."/>
            <person name="Arima T."/>
            <person name="Akita O."/>
            <person name="Kashiwagi Y."/>
            <person name="Abe K."/>
            <person name="Gomi K."/>
            <person name="Horiuchi H."/>
            <person name="Kitamoto K."/>
            <person name="Kobayashi T."/>
            <person name="Takeuchi M."/>
            <person name="Denning D.W."/>
            <person name="Galagan J.E."/>
            <person name="Nierman W.C."/>
            <person name="Yu J."/>
            <person name="Archer D.B."/>
            <person name="Bennett J.W."/>
            <person name="Bhatnagar D."/>
            <person name="Cleveland T.E."/>
            <person name="Fedorova N.D."/>
            <person name="Gotoh O."/>
            <person name="Horikawa H."/>
            <person name="Hosoyama A."/>
            <person name="Ichinomiya M."/>
            <person name="Igarashi R."/>
            <person name="Iwashita K."/>
            <person name="Juvvadi P.R."/>
            <person name="Kato M."/>
            <person name="Kato Y."/>
            <person name="Kin T."/>
            <person name="Kokubun A."/>
            <person name="Maeda H."/>
            <person name="Maeyama N."/>
            <person name="Maruyama J."/>
            <person name="Nagasaki H."/>
            <person name="Nakajima T."/>
            <person name="Oda K."/>
            <person name="Okada K."/>
            <person name="Paulsen I."/>
            <person name="Sakamoto K."/>
            <person name="Sawano T."/>
            <person name="Takahashi M."/>
            <person name="Takase K."/>
            <person name="Terabayashi Y."/>
            <person name="Wortman J.R."/>
            <person name="Yamada O."/>
            <person name="Yamagata Y."/>
            <person name="Anazawa H."/>
            <person name="Hata Y."/>
            <person name="Koide Y."/>
            <person name="Komori T."/>
            <person name="Koyama Y."/>
            <person name="Minetoki T."/>
            <person name="Suharnan S."/>
            <person name="Tanaka A."/>
            <person name="Isono K."/>
            <person name="Kuhara S."/>
            <person name="Ogasawara N."/>
            <person name="Kikuchi H."/>
        </authorList>
    </citation>
    <scope>NUCLEOTIDE SEQUENCE [LARGE SCALE GENOMIC DNA]</scope>
    <source>
        <strain>ATCC 42149 / RIB 40</strain>
    </source>
</reference>
<gene>
    <name type="primary">nop9</name>
    <name type="ORF">AO090003000665</name>
</gene>
<protein>
    <recommendedName>
        <fullName>Nucleolar protein 9</fullName>
    </recommendedName>
    <alternativeName>
        <fullName>Pumilio domain-containing protein nop9</fullName>
    </alternativeName>
</protein>
<accession>Q2UKV0</accession>
<comment type="function">
    <text evidence="1">RNA-binding nucleolar protein required for pre-rRNA processing. Involved in production of 18S rRNA and assembly of small ribosomal subunit (By similarity).</text>
</comment>
<comment type="subcellular location">
    <subcellularLocation>
        <location evidence="1">Nucleus</location>
        <location evidence="1">Nucleolus</location>
    </subcellularLocation>
</comment>
<comment type="similarity">
    <text evidence="3">Belongs to the NOP9 family.</text>
</comment>
<proteinExistence type="inferred from homology"/>
<sequence>MPRENQKRGRRAAEKAEKDAAKRKREEVPEDSLPKRLKPSTDESTEINQGADYIPFDENYNENYDGNYDENQADAPAGDMPFYGLLDPEEQEYFSRANEVLELNQFQDAEERRIFIDSVYKEANGKELKIACSQGCSRLMEKLISMSDMRQIHRLFNKFIGHFMNLVQHRFASHCCETLFINAAPGVTQKVSKSKSDKMDVDEEEGEEPEPELSLAEMFIKVVEELEGNWGYLLTERFASHTIRVLLLVLAGEPVDVSANDSVVASRKKEKLGLPQGETQDGDVSAQKRSVPDVFEATLKKIMKDIVSVLDDTYLRALATHPVGNPVLQVLVSLELSHFGKSSAKDPNSITRRLIPDESFEEGSETTTFVRGLLYDPVGSRLLETIVRCMPGKAFKGLYKNFIRDQITSLARNITAGYVVLRVLERLGKDDLQNALERIVPQVPSLLERSRMVVPKVLIERCLVRGVDTAPLARALEEAYDKDPARRLEQILRLESTTQEDLEESEQKPKGANAAPSQSSTGEKLHGSLLAQTMLTAPGPISGLIYSSLLAQSSESLVKIAKDPTASRVLQQALTVPTSSAQFRRQFAPRFTSHLKELALDSSGSHVVDALWPATKDIFFIKERMAQELTQHEMALRDSFVGRAVWRNWAMDLYKRRRGEWAMKAKGIDNNNGSGERPKSRIELARAKFAAKAEEDAKKGAQKGVTA</sequence>
<keyword id="KW-0539">Nucleus</keyword>
<keyword id="KW-1185">Reference proteome</keyword>
<keyword id="KW-0677">Repeat</keyword>
<keyword id="KW-0690">Ribosome biogenesis</keyword>
<keyword id="KW-0698">rRNA processing</keyword>